<feature type="chain" id="PRO_1000016257" description="ATP phosphoribosyltransferase regulatory subunit">
    <location>
        <begin position="1"/>
        <end position="393"/>
    </location>
</feature>
<dbReference type="EMBL" id="CP000285">
    <property type="protein sequence ID" value="ABE58636.1"/>
    <property type="molecule type" value="Genomic_DNA"/>
</dbReference>
<dbReference type="RefSeq" id="WP_011506582.1">
    <property type="nucleotide sequence ID" value="NC_007963.1"/>
</dbReference>
<dbReference type="SMR" id="Q1QY22"/>
<dbReference type="STRING" id="290398.Csal_1281"/>
<dbReference type="GeneID" id="95334020"/>
<dbReference type="KEGG" id="csa:Csal_1281"/>
<dbReference type="eggNOG" id="COG3705">
    <property type="taxonomic scope" value="Bacteria"/>
</dbReference>
<dbReference type="HOGENOM" id="CLU_025113_0_1_6"/>
<dbReference type="OrthoDB" id="9769617at2"/>
<dbReference type="UniPathway" id="UPA00031">
    <property type="reaction ID" value="UER00006"/>
</dbReference>
<dbReference type="Proteomes" id="UP000000239">
    <property type="component" value="Chromosome"/>
</dbReference>
<dbReference type="GO" id="GO:0005737">
    <property type="term" value="C:cytoplasm"/>
    <property type="evidence" value="ECO:0007669"/>
    <property type="project" value="UniProtKB-SubCell"/>
</dbReference>
<dbReference type="GO" id="GO:0000105">
    <property type="term" value="P:L-histidine biosynthetic process"/>
    <property type="evidence" value="ECO:0007669"/>
    <property type="project" value="UniProtKB-UniRule"/>
</dbReference>
<dbReference type="CDD" id="cd00773">
    <property type="entry name" value="HisRS-like_core"/>
    <property type="match status" value="1"/>
</dbReference>
<dbReference type="Gene3D" id="3.30.930.10">
    <property type="entry name" value="Bira Bifunctional Protein, Domain 2"/>
    <property type="match status" value="1"/>
</dbReference>
<dbReference type="HAMAP" id="MF_00125">
    <property type="entry name" value="HisZ"/>
    <property type="match status" value="1"/>
</dbReference>
<dbReference type="InterPro" id="IPR045864">
    <property type="entry name" value="aa-tRNA-synth_II/BPL/LPL"/>
</dbReference>
<dbReference type="InterPro" id="IPR041715">
    <property type="entry name" value="HisRS-like_core"/>
</dbReference>
<dbReference type="InterPro" id="IPR004516">
    <property type="entry name" value="HisRS/HisZ"/>
</dbReference>
<dbReference type="InterPro" id="IPR004517">
    <property type="entry name" value="HisZ"/>
</dbReference>
<dbReference type="NCBIfam" id="TIGR00443">
    <property type="entry name" value="hisZ_biosyn_reg"/>
    <property type="match status" value="1"/>
</dbReference>
<dbReference type="NCBIfam" id="NF008935">
    <property type="entry name" value="PRK12292.1-1"/>
    <property type="match status" value="1"/>
</dbReference>
<dbReference type="NCBIfam" id="NF009086">
    <property type="entry name" value="PRK12421.1"/>
    <property type="match status" value="1"/>
</dbReference>
<dbReference type="PANTHER" id="PTHR11476:SF7">
    <property type="entry name" value="HISTIDINE--TRNA LIGASE"/>
    <property type="match status" value="1"/>
</dbReference>
<dbReference type="PANTHER" id="PTHR11476">
    <property type="entry name" value="HISTIDYL-TRNA SYNTHETASE"/>
    <property type="match status" value="1"/>
</dbReference>
<dbReference type="Pfam" id="PF13393">
    <property type="entry name" value="tRNA-synt_His"/>
    <property type="match status" value="1"/>
</dbReference>
<dbReference type="PIRSF" id="PIRSF001549">
    <property type="entry name" value="His-tRNA_synth"/>
    <property type="match status" value="1"/>
</dbReference>
<dbReference type="SUPFAM" id="SSF55681">
    <property type="entry name" value="Class II aaRS and biotin synthetases"/>
    <property type="match status" value="1"/>
</dbReference>
<comment type="function">
    <text evidence="1">Required for the first step of histidine biosynthesis. May allow the feedback regulation of ATP phosphoribosyltransferase activity by histidine.</text>
</comment>
<comment type="pathway">
    <text evidence="1">Amino-acid biosynthesis; L-histidine biosynthesis; L-histidine from 5-phospho-alpha-D-ribose 1-diphosphate: step 1/9.</text>
</comment>
<comment type="subunit">
    <text evidence="1">Heteromultimer composed of HisG and HisZ subunits.</text>
</comment>
<comment type="subcellular location">
    <subcellularLocation>
        <location evidence="1">Cytoplasm</location>
    </subcellularLocation>
</comment>
<comment type="miscellaneous">
    <text>This function is generally fulfilled by the C-terminal part of HisG, which is missing in some bacteria such as this one.</text>
</comment>
<comment type="similarity">
    <text evidence="1">Belongs to the class-II aminoacyl-tRNA synthetase family. HisZ subfamily.</text>
</comment>
<accession>Q1QY22</accession>
<sequence length="393" mass="42685">MTIADRWLLPDGMDEVLPPQATRMEQLRRALLDLYDRWGYDLVIPPTVEFLDSLLTGTGTDLDLQTFKLTDQLSGRMMGASADVTPQVARMDAHSLKRSGPARLCYCTTVLRAKADKHQGGRSPTQVGVELFGHAGLDADIEVVRLALTGLEVAGAGEVHLALGHIGIYRALVHAAALSAESEQALFEAIERKAFNDVDALVARDVSDPALVDMLQALPRLYGGQEVLDQAREVFAGAPPAVMAALDELQALCRAVTDNHLRAEVYLDLAELRGYLYHTGMVFAAYVPGYGQALAKGGRYDDTGRAFGRARPATGFSMDLKLLASLEESGPRCDGIWAPADERAGLEDAIARLRASGERVIQALPGQRVGPREQRCDRQLVESNGEWRVEPLA</sequence>
<reference key="1">
    <citation type="journal article" date="2011" name="Stand. Genomic Sci.">
        <title>Complete genome sequence of the halophilic and highly halotolerant Chromohalobacter salexigens type strain (1H11(T)).</title>
        <authorList>
            <person name="Copeland A."/>
            <person name="O'Connor K."/>
            <person name="Lucas S."/>
            <person name="Lapidus A."/>
            <person name="Berry K.W."/>
            <person name="Detter J.C."/>
            <person name="Del Rio T.G."/>
            <person name="Hammon N."/>
            <person name="Dalin E."/>
            <person name="Tice H."/>
            <person name="Pitluck S."/>
            <person name="Bruce D."/>
            <person name="Goodwin L."/>
            <person name="Han C."/>
            <person name="Tapia R."/>
            <person name="Saunders E."/>
            <person name="Schmutz J."/>
            <person name="Brettin T."/>
            <person name="Larimer F."/>
            <person name="Land M."/>
            <person name="Hauser L."/>
            <person name="Vargas C."/>
            <person name="Nieto J.J."/>
            <person name="Kyrpides N.C."/>
            <person name="Ivanova N."/>
            <person name="Goker M."/>
            <person name="Klenk H.P."/>
            <person name="Csonka L.N."/>
            <person name="Woyke T."/>
        </authorList>
    </citation>
    <scope>NUCLEOTIDE SEQUENCE [LARGE SCALE GENOMIC DNA]</scope>
    <source>
        <strain>ATCC BAA-138 / DSM 3043 / CIP 106854 / NCIMB 13768 / 1H11</strain>
    </source>
</reference>
<organism>
    <name type="scientific">Chromohalobacter salexigens (strain ATCC BAA-138 / DSM 3043 / CIP 106854 / NCIMB 13768 / 1H11)</name>
    <dbReference type="NCBI Taxonomy" id="290398"/>
    <lineage>
        <taxon>Bacteria</taxon>
        <taxon>Pseudomonadati</taxon>
        <taxon>Pseudomonadota</taxon>
        <taxon>Gammaproteobacteria</taxon>
        <taxon>Oceanospirillales</taxon>
        <taxon>Halomonadaceae</taxon>
        <taxon>Chromohalobacter</taxon>
    </lineage>
</organism>
<proteinExistence type="inferred from homology"/>
<name>HISZ_CHRSD</name>
<keyword id="KW-0028">Amino-acid biosynthesis</keyword>
<keyword id="KW-0963">Cytoplasm</keyword>
<keyword id="KW-0368">Histidine biosynthesis</keyword>
<keyword id="KW-1185">Reference proteome</keyword>
<protein>
    <recommendedName>
        <fullName evidence="1">ATP phosphoribosyltransferase regulatory subunit</fullName>
    </recommendedName>
</protein>
<evidence type="ECO:0000255" key="1">
    <source>
        <dbReference type="HAMAP-Rule" id="MF_00125"/>
    </source>
</evidence>
<gene>
    <name evidence="1" type="primary">hisZ</name>
    <name type="ordered locus">Csal_1281</name>
</gene>